<dbReference type="EMBL" id="U35450">
    <property type="protein sequence ID" value="AAC43984.1"/>
    <property type="molecule type" value="Genomic_DNA"/>
</dbReference>
<dbReference type="EMBL" id="CP002312">
    <property type="protein sequence ID" value="ADQ30731.1"/>
    <property type="molecule type" value="Genomic_DNA"/>
</dbReference>
<dbReference type="RefSeq" id="WP_002656205.1">
    <property type="nucleotide sequence ID" value="NC_017403.1"/>
</dbReference>
<dbReference type="SMR" id="E4S1L1"/>
<dbReference type="GeneID" id="56567813"/>
<dbReference type="KEGG" id="bbj:BbuJD1_0385"/>
<dbReference type="PATRIC" id="fig|521008.3.peg.644"/>
<dbReference type="HOGENOM" id="CLU_038813_0_0_12"/>
<dbReference type="GO" id="GO:0005886">
    <property type="term" value="C:plasma membrane"/>
    <property type="evidence" value="ECO:0007669"/>
    <property type="project" value="UniProtKB-SubCell"/>
</dbReference>
<dbReference type="CDD" id="cd06354">
    <property type="entry name" value="PBP1_PrnA-like"/>
    <property type="match status" value="1"/>
</dbReference>
<dbReference type="Gene3D" id="3.40.50.2300">
    <property type="match status" value="2"/>
</dbReference>
<dbReference type="InterPro" id="IPR050957">
    <property type="entry name" value="BMP_lipoprotein"/>
</dbReference>
<dbReference type="InterPro" id="IPR028082">
    <property type="entry name" value="Peripla_BP_I"/>
</dbReference>
<dbReference type="InterPro" id="IPR003760">
    <property type="entry name" value="PnrA-like"/>
</dbReference>
<dbReference type="PANTHER" id="PTHR34296:SF2">
    <property type="entry name" value="ABC TRANSPORTER GUANOSINE-BINDING PROTEIN NUPN"/>
    <property type="match status" value="1"/>
</dbReference>
<dbReference type="PANTHER" id="PTHR34296">
    <property type="entry name" value="TRANSCRIPTIONAL ACTIVATOR PROTEIN MED"/>
    <property type="match status" value="1"/>
</dbReference>
<dbReference type="Pfam" id="PF02608">
    <property type="entry name" value="Bmp"/>
    <property type="match status" value="1"/>
</dbReference>
<dbReference type="SUPFAM" id="SSF53822">
    <property type="entry name" value="Periplasmic binding protein-like I"/>
    <property type="match status" value="1"/>
</dbReference>
<dbReference type="PROSITE" id="PS51257">
    <property type="entry name" value="PROKAR_LIPOPROTEIN"/>
    <property type="match status" value="1"/>
</dbReference>
<accession>E4S1L1</accession>
<accession>Q44743</accession>
<proteinExistence type="evidence at transcript level"/>
<comment type="function">
    <text evidence="1">Binds adenosine and inosine. May be part of an ABC-type nucleoside uptake system involved in the purine salvage pathway.</text>
</comment>
<comment type="subunit">
    <text evidence="1">Monomer.</text>
</comment>
<comment type="subcellular location">
    <subcellularLocation>
        <location evidence="2">Cell inner membrane</location>
        <topology evidence="2">Lipid-anchor</topology>
        <orientation evidence="1">Periplasmic side</orientation>
    </subcellularLocation>
</comment>
<comment type="induction">
    <text evidence="3">Expressed in passage 10 spirochetes as a monocistronic mRNA.</text>
</comment>
<comment type="similarity">
    <text evidence="5">Belongs to the BMP lipoprotein family.</text>
</comment>
<keyword id="KW-0997">Cell inner membrane</keyword>
<keyword id="KW-1003">Cell membrane</keyword>
<keyword id="KW-0449">Lipoprotein</keyword>
<keyword id="KW-0472">Membrane</keyword>
<keyword id="KW-0564">Palmitate</keyword>
<keyword id="KW-0732">Signal</keyword>
<keyword id="KW-0813">Transport</keyword>
<reference key="1">
    <citation type="journal article" date="1996" name="Infect. Immun.">
        <title>Molecular characterization, genomic arrangement, and expression of bmpD, a new member of the bmp class of genes encoding membrane proteins of Borrelia burgdorferi.</title>
        <authorList>
            <person name="Ramamoorthy R."/>
            <person name="Povinelli L."/>
            <person name="Philipp M.T."/>
        </authorList>
    </citation>
    <scope>NUCLEOTIDE SEQUENCE [GENOMIC DNA]</scope>
    <scope>INDUCTION</scope>
    <source>
        <strain>JD1</strain>
    </source>
</reference>
<reference key="2">
    <citation type="journal article" date="2011" name="J. Bacteriol.">
        <title>Whole-genome sequences of thirteen isolates of Borrelia burgdorferi.</title>
        <authorList>
            <person name="Schutzer S.E."/>
            <person name="Fraser-Liggett C.M."/>
            <person name="Casjens S.R."/>
            <person name="Qiu W.G."/>
            <person name="Dunn J.J."/>
            <person name="Mongodin E.F."/>
            <person name="Luft B.J."/>
        </authorList>
    </citation>
    <scope>NUCLEOTIDE SEQUENCE [LARGE SCALE GENOMIC DNA]</scope>
    <source>
        <strain>JD1</strain>
    </source>
</reference>
<feature type="signal peptide" evidence="2">
    <location>
        <begin position="1"/>
        <end position="16"/>
    </location>
</feature>
<feature type="chain" id="PRO_0000406193" description="Basic membrane protein D">
    <location>
        <begin position="17"/>
        <end position="341"/>
    </location>
</feature>
<feature type="lipid moiety-binding region" description="N-palmitoyl cysteine" evidence="2">
    <location>
        <position position="17"/>
    </location>
</feature>
<feature type="lipid moiety-binding region" description="S-diacylglycerol cysteine" evidence="2">
    <location>
        <position position="17"/>
    </location>
</feature>
<gene>
    <name evidence="4" type="primary">bmpD</name>
    <name type="ordered locus">BbuJD1_0385</name>
</gene>
<organism>
    <name type="scientific">Borreliella burgdorferi (strain JD1)</name>
    <name type="common">Borrelia burgdorferi</name>
    <dbReference type="NCBI Taxonomy" id="521008"/>
    <lineage>
        <taxon>Bacteria</taxon>
        <taxon>Pseudomonadati</taxon>
        <taxon>Spirochaetota</taxon>
        <taxon>Spirochaetia</taxon>
        <taxon>Spirochaetales</taxon>
        <taxon>Borreliaceae</taxon>
        <taxon>Borreliella</taxon>
    </lineage>
</organism>
<protein>
    <recommendedName>
        <fullName evidence="4">Basic membrane protein D</fullName>
    </recommendedName>
    <alternativeName>
        <fullName evidence="1">Probable substrate-binding protein BmpD</fullName>
    </alternativeName>
</protein>
<evidence type="ECO:0000250" key="1">
    <source>
        <dbReference type="UniProtKB" id="P0CL55"/>
    </source>
</evidence>
<evidence type="ECO:0000255" key="2">
    <source>
        <dbReference type="PROSITE-ProRule" id="PRU00303"/>
    </source>
</evidence>
<evidence type="ECO:0000269" key="3">
    <source>
    </source>
</evidence>
<evidence type="ECO:0000303" key="4">
    <source>
    </source>
</evidence>
<evidence type="ECO:0000305" key="5"/>
<name>BMPD_BORBJ</name>
<sequence length="341" mass="37163">MLKKVYYFLIFLFIVACSSSDDGKSEAKTVSLIVDGAFDDKGFNESSSKAIRKLKADLNINIIEKASTGNSYLGDIANLEDGNSNLIWGIGFRLSDILFQRASENVSVNYAIIEGVYDEIQIPKNLLNISFRSEEVAFLAGYFASKASKTGKIGFVGGVRGKVLESFMYGYEAGAKYANSNIKVVSQYVGTFGDFGLGRSTASNMYRDGVDIIFAAAGLSGIGVIEAAKELGPDHYIIGVDQDQSYLAPNNVIVSAVKKVDSLMYSLTKKYLETGVLDGGKTMFLGLKEDGLGLVLNENLKSNYSEIYNKSLKIGQSIMNGIIKVPYDKVSYDNFVLQMEN</sequence>